<feature type="chain" id="PRO_0000177426" description="Large ribosomal subunit protein bL35">
    <location>
        <begin position="1"/>
        <end position="66"/>
    </location>
</feature>
<feature type="region of interest" description="Disordered" evidence="2">
    <location>
        <begin position="1"/>
        <end position="49"/>
    </location>
</feature>
<feature type="compositionally biased region" description="Basic residues" evidence="2">
    <location>
        <begin position="1"/>
        <end position="26"/>
    </location>
</feature>
<keyword id="KW-1185">Reference proteome</keyword>
<keyword id="KW-0687">Ribonucleoprotein</keyword>
<keyword id="KW-0689">Ribosomal protein</keyword>
<evidence type="ECO:0000255" key="1">
    <source>
        <dbReference type="HAMAP-Rule" id="MF_00514"/>
    </source>
</evidence>
<evidence type="ECO:0000256" key="2">
    <source>
        <dbReference type="SAM" id="MobiDB-lite"/>
    </source>
</evidence>
<evidence type="ECO:0000305" key="3"/>
<name>RL35_STAS1</name>
<accession>Q49YB1</accession>
<proteinExistence type="inferred from homology"/>
<gene>
    <name evidence="1" type="primary">rpmI</name>
    <name type="ordered locus">SSP1085</name>
</gene>
<comment type="similarity">
    <text evidence="1">Belongs to the bacterial ribosomal protein bL35 family.</text>
</comment>
<sequence length="66" mass="7614">MPKMKTHRGAAKRVKRTGSGKLKRSRAFTSHLFANKSTKQKRKLRKASLVSKSDMKRVKQLLAYKK</sequence>
<reference key="1">
    <citation type="journal article" date="2005" name="Proc. Natl. Acad. Sci. U.S.A.">
        <title>Whole genome sequence of Staphylococcus saprophyticus reveals the pathogenesis of uncomplicated urinary tract infection.</title>
        <authorList>
            <person name="Kuroda M."/>
            <person name="Yamashita A."/>
            <person name="Hirakawa H."/>
            <person name="Kumano M."/>
            <person name="Morikawa K."/>
            <person name="Higashide M."/>
            <person name="Maruyama A."/>
            <person name="Inose Y."/>
            <person name="Matoba K."/>
            <person name="Toh H."/>
            <person name="Kuhara S."/>
            <person name="Hattori M."/>
            <person name="Ohta T."/>
        </authorList>
    </citation>
    <scope>NUCLEOTIDE SEQUENCE [LARGE SCALE GENOMIC DNA]</scope>
    <source>
        <strain>ATCC 15305 / DSM 20229 / NCIMB 8711 / NCTC 7292 / S-41</strain>
    </source>
</reference>
<protein>
    <recommendedName>
        <fullName evidence="1">Large ribosomal subunit protein bL35</fullName>
    </recommendedName>
    <alternativeName>
        <fullName evidence="3">50S ribosomal protein L35</fullName>
    </alternativeName>
</protein>
<organism>
    <name type="scientific">Staphylococcus saprophyticus subsp. saprophyticus (strain ATCC 15305 / DSM 20229 / NCIMB 8711 / NCTC 7292 / S-41)</name>
    <dbReference type="NCBI Taxonomy" id="342451"/>
    <lineage>
        <taxon>Bacteria</taxon>
        <taxon>Bacillati</taxon>
        <taxon>Bacillota</taxon>
        <taxon>Bacilli</taxon>
        <taxon>Bacillales</taxon>
        <taxon>Staphylococcaceae</taxon>
        <taxon>Staphylococcus</taxon>
    </lineage>
</organism>
<dbReference type="EMBL" id="AP008934">
    <property type="protein sequence ID" value="BAE18230.1"/>
    <property type="molecule type" value="Genomic_DNA"/>
</dbReference>
<dbReference type="RefSeq" id="WP_002483064.1">
    <property type="nucleotide sequence ID" value="NZ_MTGA01000038.1"/>
</dbReference>
<dbReference type="SMR" id="Q49YB1"/>
<dbReference type="GeneID" id="66867318"/>
<dbReference type="KEGG" id="ssp:SSP1085"/>
<dbReference type="eggNOG" id="COG0291">
    <property type="taxonomic scope" value="Bacteria"/>
</dbReference>
<dbReference type="HOGENOM" id="CLU_169643_3_0_9"/>
<dbReference type="OrthoDB" id="47476at2"/>
<dbReference type="Proteomes" id="UP000006371">
    <property type="component" value="Chromosome"/>
</dbReference>
<dbReference type="GO" id="GO:0022625">
    <property type="term" value="C:cytosolic large ribosomal subunit"/>
    <property type="evidence" value="ECO:0007669"/>
    <property type="project" value="TreeGrafter"/>
</dbReference>
<dbReference type="GO" id="GO:0003735">
    <property type="term" value="F:structural constituent of ribosome"/>
    <property type="evidence" value="ECO:0007669"/>
    <property type="project" value="InterPro"/>
</dbReference>
<dbReference type="GO" id="GO:0006412">
    <property type="term" value="P:translation"/>
    <property type="evidence" value="ECO:0007669"/>
    <property type="project" value="UniProtKB-UniRule"/>
</dbReference>
<dbReference type="FunFam" id="4.10.410.60:FF:000001">
    <property type="entry name" value="50S ribosomal protein L35"/>
    <property type="match status" value="1"/>
</dbReference>
<dbReference type="Gene3D" id="4.10.410.60">
    <property type="match status" value="1"/>
</dbReference>
<dbReference type="HAMAP" id="MF_00514">
    <property type="entry name" value="Ribosomal_bL35"/>
    <property type="match status" value="1"/>
</dbReference>
<dbReference type="InterPro" id="IPR001706">
    <property type="entry name" value="Ribosomal_bL35"/>
</dbReference>
<dbReference type="InterPro" id="IPR021137">
    <property type="entry name" value="Ribosomal_bL35-like"/>
</dbReference>
<dbReference type="InterPro" id="IPR018265">
    <property type="entry name" value="Ribosomal_bL35_CS"/>
</dbReference>
<dbReference type="InterPro" id="IPR037229">
    <property type="entry name" value="Ribosomal_bL35_sf"/>
</dbReference>
<dbReference type="NCBIfam" id="TIGR00001">
    <property type="entry name" value="rpmI_bact"/>
    <property type="match status" value="1"/>
</dbReference>
<dbReference type="PANTHER" id="PTHR33343">
    <property type="entry name" value="54S RIBOSOMAL PROTEIN BL35M"/>
    <property type="match status" value="1"/>
</dbReference>
<dbReference type="PANTHER" id="PTHR33343:SF1">
    <property type="entry name" value="LARGE RIBOSOMAL SUBUNIT PROTEIN BL35M"/>
    <property type="match status" value="1"/>
</dbReference>
<dbReference type="Pfam" id="PF01632">
    <property type="entry name" value="Ribosomal_L35p"/>
    <property type="match status" value="1"/>
</dbReference>
<dbReference type="PRINTS" id="PR00064">
    <property type="entry name" value="RIBOSOMALL35"/>
</dbReference>
<dbReference type="SUPFAM" id="SSF143034">
    <property type="entry name" value="L35p-like"/>
    <property type="match status" value="1"/>
</dbReference>
<dbReference type="PROSITE" id="PS00936">
    <property type="entry name" value="RIBOSOMAL_L35"/>
    <property type="match status" value="1"/>
</dbReference>